<evidence type="ECO:0000255" key="1">
    <source>
        <dbReference type="HAMAP-Rule" id="MF_00251"/>
    </source>
</evidence>
<evidence type="ECO:0000305" key="2"/>
<gene>
    <name evidence="1" type="primary">rpmJ</name>
    <name type="ordered locus">BF4158.1</name>
</gene>
<sequence length="38" mass="4587">MKVRASLKKRTPECKIVRRNGRLYVINKKNPKYKQRQG</sequence>
<proteinExistence type="inferred from homology"/>
<name>RL36_BACFR</name>
<organism>
    <name type="scientific">Bacteroides fragilis (strain YCH46)</name>
    <dbReference type="NCBI Taxonomy" id="295405"/>
    <lineage>
        <taxon>Bacteria</taxon>
        <taxon>Pseudomonadati</taxon>
        <taxon>Bacteroidota</taxon>
        <taxon>Bacteroidia</taxon>
        <taxon>Bacteroidales</taxon>
        <taxon>Bacteroidaceae</taxon>
        <taxon>Bacteroides</taxon>
    </lineage>
</organism>
<comment type="similarity">
    <text evidence="1">Belongs to the bacterial ribosomal protein bL36 family.</text>
</comment>
<dbReference type="EMBL" id="AP006841">
    <property type="protein sequence ID" value="BAD50901.1"/>
    <property type="molecule type" value="Genomic_DNA"/>
</dbReference>
<dbReference type="RefSeq" id="YP_101435.1">
    <property type="nucleotide sequence ID" value="NC_006347.1"/>
</dbReference>
<dbReference type="SMR" id="Q64NN1"/>
<dbReference type="STRING" id="295405.BF4158.1"/>
<dbReference type="KEGG" id="bfr:BF4158.1"/>
<dbReference type="PATRIC" id="fig|295405.11.peg.4012"/>
<dbReference type="HOGENOM" id="CLU_135723_3_3_10"/>
<dbReference type="OrthoDB" id="9801558at2"/>
<dbReference type="Proteomes" id="UP000002197">
    <property type="component" value="Chromosome"/>
</dbReference>
<dbReference type="GO" id="GO:1990904">
    <property type="term" value="C:ribonucleoprotein complex"/>
    <property type="evidence" value="ECO:0007669"/>
    <property type="project" value="UniProtKB-KW"/>
</dbReference>
<dbReference type="GO" id="GO:0005840">
    <property type="term" value="C:ribosome"/>
    <property type="evidence" value="ECO:0007669"/>
    <property type="project" value="UniProtKB-KW"/>
</dbReference>
<dbReference type="GO" id="GO:0003735">
    <property type="term" value="F:structural constituent of ribosome"/>
    <property type="evidence" value="ECO:0007669"/>
    <property type="project" value="InterPro"/>
</dbReference>
<dbReference type="GO" id="GO:0006412">
    <property type="term" value="P:translation"/>
    <property type="evidence" value="ECO:0007669"/>
    <property type="project" value="UniProtKB-UniRule"/>
</dbReference>
<dbReference type="HAMAP" id="MF_00251">
    <property type="entry name" value="Ribosomal_bL36"/>
    <property type="match status" value="1"/>
</dbReference>
<dbReference type="InterPro" id="IPR000473">
    <property type="entry name" value="Ribosomal_bL36"/>
</dbReference>
<dbReference type="InterPro" id="IPR035977">
    <property type="entry name" value="Ribosomal_bL36_sp"/>
</dbReference>
<dbReference type="InterPro" id="IPR047621">
    <property type="entry name" value="Ribosomal_L36_bact"/>
</dbReference>
<dbReference type="NCBIfam" id="NF002021">
    <property type="entry name" value="PRK00831.1"/>
    <property type="match status" value="1"/>
</dbReference>
<dbReference type="NCBIfam" id="TIGR01022">
    <property type="entry name" value="rpmJ_bact"/>
    <property type="match status" value="1"/>
</dbReference>
<dbReference type="PANTHER" id="PTHR47781">
    <property type="entry name" value="50S RIBOSOMAL PROTEIN L36 2"/>
    <property type="match status" value="1"/>
</dbReference>
<dbReference type="PANTHER" id="PTHR47781:SF1">
    <property type="entry name" value="LARGE RIBOSOMAL SUBUNIT PROTEIN BL36B"/>
    <property type="match status" value="1"/>
</dbReference>
<dbReference type="Pfam" id="PF00444">
    <property type="entry name" value="Ribosomal_L36"/>
    <property type="match status" value="1"/>
</dbReference>
<dbReference type="SUPFAM" id="SSF57840">
    <property type="entry name" value="Ribosomal protein L36"/>
    <property type="match status" value="1"/>
</dbReference>
<protein>
    <recommendedName>
        <fullName evidence="1">Large ribosomal subunit protein bL36</fullName>
    </recommendedName>
    <alternativeName>
        <fullName evidence="2">50S ribosomal protein L36</fullName>
    </alternativeName>
</protein>
<accession>Q64NN1</accession>
<reference key="1">
    <citation type="journal article" date="2004" name="Proc. Natl. Acad. Sci. U.S.A.">
        <title>Genomic analysis of Bacteroides fragilis reveals extensive DNA inversions regulating cell surface adaptation.</title>
        <authorList>
            <person name="Kuwahara T."/>
            <person name="Yamashita A."/>
            <person name="Hirakawa H."/>
            <person name="Nakayama H."/>
            <person name="Toh H."/>
            <person name="Okada N."/>
            <person name="Kuhara S."/>
            <person name="Hattori M."/>
            <person name="Hayashi T."/>
            <person name="Ohnishi Y."/>
        </authorList>
    </citation>
    <scope>NUCLEOTIDE SEQUENCE [LARGE SCALE GENOMIC DNA]</scope>
    <source>
        <strain>YCH46</strain>
    </source>
</reference>
<feature type="chain" id="PRO_0000126145" description="Large ribosomal subunit protein bL36">
    <location>
        <begin position="1"/>
        <end position="38"/>
    </location>
</feature>
<keyword id="KW-0687">Ribonucleoprotein</keyword>
<keyword id="KW-0689">Ribosomal protein</keyword>